<organism>
    <name type="scientific">Saccharomyces cerevisiae (strain ATCC 204508 / S288c)</name>
    <name type="common">Baker's yeast</name>
    <dbReference type="NCBI Taxonomy" id="559292"/>
    <lineage>
        <taxon>Eukaryota</taxon>
        <taxon>Fungi</taxon>
        <taxon>Dikarya</taxon>
        <taxon>Ascomycota</taxon>
        <taxon>Saccharomycotina</taxon>
        <taxon>Saccharomycetes</taxon>
        <taxon>Saccharomycetales</taxon>
        <taxon>Saccharomycetaceae</taxon>
        <taxon>Saccharomyces</taxon>
    </lineage>
</organism>
<feature type="signal peptide" evidence="1">
    <location>
        <begin position="1"/>
        <end position="33"/>
    </location>
</feature>
<feature type="chain" id="PRO_0000034373" description="Transmembrane 9 superfamily member 3">
    <location>
        <begin position="34"/>
        <end position="706"/>
    </location>
</feature>
<feature type="topological domain" description="Lumenal" evidence="1">
    <location>
        <begin position="34"/>
        <end position="290"/>
    </location>
</feature>
<feature type="transmembrane region" description="Helical" evidence="1">
    <location>
        <begin position="291"/>
        <end position="311"/>
    </location>
</feature>
<feature type="topological domain" description="Cytoplasmic" evidence="1">
    <location>
        <begin position="312"/>
        <end position="371"/>
    </location>
</feature>
<feature type="transmembrane region" description="Helical" evidence="1">
    <location>
        <begin position="372"/>
        <end position="392"/>
    </location>
</feature>
<feature type="topological domain" description="Lumenal" evidence="1">
    <location>
        <begin position="393"/>
        <end position="405"/>
    </location>
</feature>
<feature type="transmembrane region" description="Helical" evidence="1">
    <location>
        <begin position="406"/>
        <end position="426"/>
    </location>
</feature>
<feature type="topological domain" description="Cytoplasmic" evidence="1">
    <location>
        <begin position="427"/>
        <end position="456"/>
    </location>
</feature>
<feature type="transmembrane region" description="Helical" evidence="1">
    <location>
        <begin position="457"/>
        <end position="477"/>
    </location>
</feature>
<feature type="topological domain" description="Lumenal" evidence="1">
    <location>
        <begin position="478"/>
        <end position="494"/>
    </location>
</feature>
<feature type="transmembrane region" description="Helical" evidence="1">
    <location>
        <begin position="495"/>
        <end position="515"/>
    </location>
</feature>
<feature type="topological domain" description="Cytoplasmic" evidence="1">
    <location>
        <begin position="516"/>
        <end position="553"/>
    </location>
</feature>
<feature type="transmembrane region" description="Helical" evidence="1">
    <location>
        <begin position="554"/>
        <end position="574"/>
    </location>
</feature>
<feature type="topological domain" description="Lumenal" evidence="1">
    <location>
        <begin position="575"/>
        <end position="592"/>
    </location>
</feature>
<feature type="transmembrane region" description="Helical" evidence="1">
    <location>
        <begin position="593"/>
        <end position="613"/>
    </location>
</feature>
<feature type="topological domain" description="Cytoplasmic" evidence="1">
    <location>
        <begin position="614"/>
        <end position="637"/>
    </location>
</feature>
<feature type="transmembrane region" description="Helical" evidence="1">
    <location>
        <begin position="638"/>
        <end position="658"/>
    </location>
</feature>
<feature type="topological domain" description="Lumenal" evidence="1">
    <location>
        <begin position="659"/>
        <end position="665"/>
    </location>
</feature>
<feature type="transmembrane region" description="Helical" evidence="1">
    <location>
        <begin position="666"/>
        <end position="686"/>
    </location>
</feature>
<feature type="topological domain" description="Cytoplasmic" evidence="1">
    <location>
        <begin position="687"/>
        <end position="706"/>
    </location>
</feature>
<protein>
    <recommendedName>
        <fullName>Transmembrane 9 superfamily member 3</fullName>
    </recommendedName>
</protein>
<gene>
    <name type="primary">TMN3</name>
    <name type="ordered locus">YER113C</name>
</gene>
<keyword id="KW-0333">Golgi apparatus</keyword>
<keyword id="KW-0406">Ion transport</keyword>
<keyword id="KW-0472">Membrane</keyword>
<keyword id="KW-1185">Reference proteome</keyword>
<keyword id="KW-0732">Signal</keyword>
<keyword id="KW-0812">Transmembrane</keyword>
<keyword id="KW-1133">Transmembrane helix</keyword>
<keyword id="KW-0813">Transport</keyword>
<dbReference type="EMBL" id="U18916">
    <property type="protein sequence ID" value="AAC03211.1"/>
    <property type="molecule type" value="Genomic_DNA"/>
</dbReference>
<dbReference type="EMBL" id="BK006939">
    <property type="protein sequence ID" value="DAA07773.1"/>
    <property type="molecule type" value="Genomic_DNA"/>
</dbReference>
<dbReference type="PIR" id="S50616">
    <property type="entry name" value="S50616"/>
</dbReference>
<dbReference type="RefSeq" id="NP_011038.3">
    <property type="nucleotide sequence ID" value="NM_001179003.3"/>
</dbReference>
<dbReference type="SMR" id="P40071"/>
<dbReference type="BioGRID" id="36858">
    <property type="interactions" value="74"/>
</dbReference>
<dbReference type="DIP" id="DIP-849N"/>
<dbReference type="FunCoup" id="P40071">
    <property type="interactions" value="30"/>
</dbReference>
<dbReference type="IntAct" id="P40071">
    <property type="interactions" value="8"/>
</dbReference>
<dbReference type="MINT" id="P40071"/>
<dbReference type="STRING" id="4932.YER113C"/>
<dbReference type="iPTMnet" id="P40071"/>
<dbReference type="PaxDb" id="4932-YER113C"/>
<dbReference type="PeptideAtlas" id="P40071"/>
<dbReference type="EnsemblFungi" id="YER113C_mRNA">
    <property type="protein sequence ID" value="YER113C"/>
    <property type="gene ID" value="YER113C"/>
</dbReference>
<dbReference type="GeneID" id="856849"/>
<dbReference type="KEGG" id="sce:YER113C"/>
<dbReference type="AGR" id="SGD:S000000915"/>
<dbReference type="SGD" id="S000000915">
    <property type="gene designation" value="TMN3"/>
</dbReference>
<dbReference type="VEuPathDB" id="FungiDB:YER113C"/>
<dbReference type="eggNOG" id="KOG1278">
    <property type="taxonomic scope" value="Eukaryota"/>
</dbReference>
<dbReference type="HOGENOM" id="CLU_010714_4_0_1"/>
<dbReference type="InParanoid" id="P40071"/>
<dbReference type="OMA" id="CPGASKD"/>
<dbReference type="OrthoDB" id="1666796at2759"/>
<dbReference type="BioCyc" id="YEAST:G3O-30277-MONOMER"/>
<dbReference type="BioGRID-ORCS" id="856849">
    <property type="hits" value="0 hits in 10 CRISPR screens"/>
</dbReference>
<dbReference type="PRO" id="PR:P40071"/>
<dbReference type="Proteomes" id="UP000002311">
    <property type="component" value="Chromosome V"/>
</dbReference>
<dbReference type="RNAct" id="P40071">
    <property type="molecule type" value="protein"/>
</dbReference>
<dbReference type="GO" id="GO:0005794">
    <property type="term" value="C:Golgi apparatus"/>
    <property type="evidence" value="ECO:0007005"/>
    <property type="project" value="SGD"/>
</dbReference>
<dbReference type="GO" id="GO:0000139">
    <property type="term" value="C:Golgi membrane"/>
    <property type="evidence" value="ECO:0007669"/>
    <property type="project" value="UniProtKB-SubCell"/>
</dbReference>
<dbReference type="GO" id="GO:0016020">
    <property type="term" value="C:membrane"/>
    <property type="evidence" value="ECO:0000318"/>
    <property type="project" value="GO_Central"/>
</dbReference>
<dbReference type="GO" id="GO:0006878">
    <property type="term" value="P:intracellular copper ion homeostasis"/>
    <property type="evidence" value="ECO:0000315"/>
    <property type="project" value="UniProtKB"/>
</dbReference>
<dbReference type="GO" id="GO:0001403">
    <property type="term" value="P:invasive growth in response to glucose limitation"/>
    <property type="evidence" value="ECO:0000315"/>
    <property type="project" value="SGD"/>
</dbReference>
<dbReference type="GO" id="GO:0006811">
    <property type="term" value="P:monoatomic ion transport"/>
    <property type="evidence" value="ECO:0007669"/>
    <property type="project" value="UniProtKB-KW"/>
</dbReference>
<dbReference type="GO" id="GO:0072657">
    <property type="term" value="P:protein localization to membrane"/>
    <property type="evidence" value="ECO:0000318"/>
    <property type="project" value="GO_Central"/>
</dbReference>
<dbReference type="GO" id="GO:0007124">
    <property type="term" value="P:pseudohyphal growth"/>
    <property type="evidence" value="ECO:0000316"/>
    <property type="project" value="SGD"/>
</dbReference>
<dbReference type="GO" id="GO:0007034">
    <property type="term" value="P:vacuolar transport"/>
    <property type="evidence" value="ECO:0000316"/>
    <property type="project" value="SGD"/>
</dbReference>
<dbReference type="InterPro" id="IPR004240">
    <property type="entry name" value="EMP70"/>
</dbReference>
<dbReference type="PANTHER" id="PTHR10766:SF55">
    <property type="entry name" value="TRANSMEMBRANE 9 SUPERFAMILY MEMBER 4"/>
    <property type="match status" value="1"/>
</dbReference>
<dbReference type="PANTHER" id="PTHR10766">
    <property type="entry name" value="TRANSMEMBRANE 9 SUPERFAMILY PROTEIN"/>
    <property type="match status" value="1"/>
</dbReference>
<dbReference type="Pfam" id="PF02990">
    <property type="entry name" value="EMP70"/>
    <property type="match status" value="1"/>
</dbReference>
<accession>P40071</accession>
<accession>D3DM19</accession>
<reference key="1">
    <citation type="journal article" date="1997" name="Nature">
        <title>The nucleotide sequence of Saccharomyces cerevisiae chromosome V.</title>
        <authorList>
            <person name="Dietrich F.S."/>
            <person name="Mulligan J.T."/>
            <person name="Hennessy K.M."/>
            <person name="Yelton M.A."/>
            <person name="Allen E."/>
            <person name="Araujo R."/>
            <person name="Aviles E."/>
            <person name="Berno A."/>
            <person name="Brennan T."/>
            <person name="Carpenter J."/>
            <person name="Chen E."/>
            <person name="Cherry J.M."/>
            <person name="Chung E."/>
            <person name="Duncan M."/>
            <person name="Guzman E."/>
            <person name="Hartzell G."/>
            <person name="Hunicke-Smith S."/>
            <person name="Hyman R.W."/>
            <person name="Kayser A."/>
            <person name="Komp C."/>
            <person name="Lashkari D."/>
            <person name="Lew H."/>
            <person name="Lin D."/>
            <person name="Mosedale D."/>
            <person name="Nakahara K."/>
            <person name="Namath A."/>
            <person name="Norgren R."/>
            <person name="Oefner P."/>
            <person name="Oh C."/>
            <person name="Petel F.X."/>
            <person name="Roberts D."/>
            <person name="Sehl P."/>
            <person name="Schramm S."/>
            <person name="Shogren T."/>
            <person name="Smith V."/>
            <person name="Taylor P."/>
            <person name="Wei Y."/>
            <person name="Botstein D."/>
            <person name="Davis R.W."/>
        </authorList>
    </citation>
    <scope>NUCLEOTIDE SEQUENCE [LARGE SCALE GENOMIC DNA]</scope>
    <source>
        <strain>ATCC 204508 / S288c</strain>
    </source>
</reference>
<reference key="2">
    <citation type="journal article" date="2014" name="G3 (Bethesda)">
        <title>The reference genome sequence of Saccharomyces cerevisiae: Then and now.</title>
        <authorList>
            <person name="Engel S.R."/>
            <person name="Dietrich F.S."/>
            <person name="Fisk D.G."/>
            <person name="Binkley G."/>
            <person name="Balakrishnan R."/>
            <person name="Costanzo M.C."/>
            <person name="Dwight S.S."/>
            <person name="Hitz B.C."/>
            <person name="Karra K."/>
            <person name="Nash R.S."/>
            <person name="Weng S."/>
            <person name="Wong E.D."/>
            <person name="Lloyd P."/>
            <person name="Skrzypek M.S."/>
            <person name="Miyasato S.R."/>
            <person name="Simison M."/>
            <person name="Cherry J.M."/>
        </authorList>
    </citation>
    <scope>GENOME REANNOTATION</scope>
    <source>
        <strain>ATCC 204508 / S288c</strain>
    </source>
</reference>
<reference key="3">
    <citation type="journal article" date="2003" name="Nature">
        <title>Global analysis of protein localization in budding yeast.</title>
        <authorList>
            <person name="Huh W.-K."/>
            <person name="Falvo J.V."/>
            <person name="Gerke L.C."/>
            <person name="Carroll A.S."/>
            <person name="Howson R.W."/>
            <person name="Weissman J.S."/>
            <person name="O'Shea E.K."/>
        </authorList>
    </citation>
    <scope>SUBCELLULAR LOCATION [LARGE SCALE ANALYSIS]</scope>
</reference>
<reference key="4">
    <citation type="journal article" date="2006" name="Proc. Natl. Acad. Sci. U.S.A.">
        <title>A global topology map of the Saccharomyces cerevisiae membrane proteome.</title>
        <authorList>
            <person name="Kim H."/>
            <person name="Melen K."/>
            <person name="Oesterberg M."/>
            <person name="von Heijne G."/>
        </authorList>
    </citation>
    <scope>TOPOLOGY [LARGE SCALE ANALYSIS]</scope>
    <source>
        <strain>ATCC 208353 / W303-1A</strain>
    </source>
</reference>
<reference key="5">
    <citation type="journal article" date="2008" name="J. Biol. Chem.">
        <title>Control of cellular physiology by TM9 proteins in yeast and Dictyostelium.</title>
        <authorList>
            <person name="Froquet R."/>
            <person name="Cherix N."/>
            <person name="Birke R."/>
            <person name="Benghezal M."/>
            <person name="Cameroni E."/>
            <person name="Letourneur F."/>
            <person name="Moesch H.-U."/>
            <person name="De Virgilio C."/>
            <person name="Cosson P."/>
        </authorList>
    </citation>
    <scope>FUNCTION</scope>
</reference>
<reference key="6">
    <citation type="journal article" date="2010" name="Physiol. Plantarum">
        <title>Transmembrane nine proteins in yeast and Arabidopsis affect cellular metal contents without changing vacuolar morphology.</title>
        <authorList>
            <person name="Hegelund J.N."/>
            <person name="Jahn T.P."/>
            <person name="Baekgaard L."/>
            <person name="Palmgren M.G."/>
            <person name="Schjoerring J.K."/>
        </authorList>
    </citation>
    <scope>FUNCTION</scope>
</reference>
<proteinExistence type="evidence at protein level"/>
<evidence type="ECO:0000255" key="1"/>
<evidence type="ECO:0000269" key="2">
    <source>
    </source>
</evidence>
<evidence type="ECO:0000269" key="3">
    <source>
    </source>
</evidence>
<evidence type="ECO:0000269" key="4">
    <source>
    </source>
</evidence>
<evidence type="ECO:0000305" key="5"/>
<sequence length="706" mass="81546">MRVRPKRSVITLMAIVVVMLILRNQFYSSRTRGHGQEPVISSSQKNLYDGWITPNFYRKGDPLELIVNKVESDLTQLPYAYYDLPFTCPPTMHKKPLHLSLNEIIRGDRKWESDYKLKFGEDNPCETLCARKTTKEGMQTLDKLVREGYVVQWLIDDELPAATTFISTTDHKKYYASGFPLGFIDPDTDKTYLHNHVMLVIRFHASDNDKNTIVGFEVYPRSVSDYHCPGASKNYEQYEIVIPEDENELTYLPFTYSVYWREEFEVDWNHRWDYFLNAGELSDEQSIQFHWMSLANSVGIVLSISFITLIIYVRVMYTDKSNSKSPKYMINIEGIETEDDLDDDKYGKYSVYTVAKDWIQNGRPNLFGLKVLILLVSFGVQFLFTIIGSLTISCSMNKLHNVRNSVLTMAILFFVLGAFMASFVGTRLSMVTKTKRTKANYLDDNRYLKDYKKFSPIFTILCGSSLPGIVMVSTFLLNSIVWAHDSTSALPFKTIVFFMSIYFIVCIPLSLFGGIVANNIPLPQYWLSGITKDESNSDGNGLFVPKSRAKFNPLVYCGIYLCGIFPLLVIYVEMQYVYKSLWLEKTTFYYFYGFLFLSIILLCVLTMEISIIGSYLLMRFCFEDKVVRNNWRWKCFEMGFSGGVYMELYSLYYIFAVLNIHGFSSILISICYSLIFNVMCSLGLGALSYLTASWFINKIYHQKVNL</sequence>
<comment type="function">
    <text evidence="3 4">With EMP70 and TMN2, plays a critical role in the late stages of a nutrient-controlled pathway notably regulating FLO11 gene expression. Acts downstream of RAS2 and TOR. Essential for cell adhesion and filamentous growth. May play a role as effector of cellular copper homeostasis.</text>
</comment>
<comment type="subcellular location">
    <subcellularLocation>
        <location evidence="2">Golgi apparatus membrane</location>
        <topology evidence="2">Multi-pass membrane protein</topology>
    </subcellularLocation>
</comment>
<comment type="similarity">
    <text evidence="5">Belongs to the nonaspanin (TM9SF) (TC 9.A.2) family.</text>
</comment>
<name>TMN3_YEAST</name>